<accession>Q6BMK7</accession>
<accession>B5RU92</accession>
<sequence length="370" mass="42934">MSSQEKHKPEYDSSGKEVNPYIPKFISAVPWYHNKSNDEKSDDYLSHQRSNVADEAKDHSIPQPGSGINDEFEIKGETEIKKVEDYDSKRDRWHGYEAQEWDKIAENWDKIKKKKQKTKNASVEEDSDDTDYELELVELGLDSKDIKNNLKEDPLEKTIRDRQDVPAYILNITSSNKIHYDPKSRLTKDPSKGFINDKNQFVKKLTGEAKRLDNLQKFAWEQNRQQEEMKQREAFEQKLTGKKHSEGGPDEYQVDLNLNMEANPTAMMLQARHKQEQQQASHDQKKSDLVAKYGGGEFLNKSKEFVNVTESIQTGDKPINKDKNGLKRSIYPEDNYSMNHQSIWGSYYSGGQWGYCCCKQTTRNSRCTLN</sequence>
<feature type="chain" id="PRO_0000218547" description="Pre-mRNA-splicing factor SLU7">
    <location>
        <begin position="1"/>
        <end position="370"/>
    </location>
</feature>
<feature type="region of interest" description="Disordered" evidence="2">
    <location>
        <begin position="36"/>
        <end position="74"/>
    </location>
</feature>
<feature type="compositionally biased region" description="Basic and acidic residues" evidence="2">
    <location>
        <begin position="36"/>
        <end position="60"/>
    </location>
</feature>
<protein>
    <recommendedName>
        <fullName>Pre-mRNA-splicing factor SLU7</fullName>
    </recommendedName>
</protein>
<comment type="function">
    <text evidence="1">Involved in pre-mRNA splicing.</text>
</comment>
<comment type="subunit">
    <text evidence="1">Associated with the spliceosome.</text>
</comment>
<comment type="subcellular location">
    <subcellularLocation>
        <location evidence="1">Nucleus</location>
    </subcellularLocation>
</comment>
<comment type="similarity">
    <text evidence="3">Belongs to the SLU7 family.</text>
</comment>
<keyword id="KW-0507">mRNA processing</keyword>
<keyword id="KW-0508">mRNA splicing</keyword>
<keyword id="KW-0539">Nucleus</keyword>
<keyword id="KW-1185">Reference proteome</keyword>
<keyword id="KW-0747">Spliceosome</keyword>
<gene>
    <name type="primary">SLU7</name>
    <name type="ordered locus">DEHA2F04554g</name>
</gene>
<reference key="1">
    <citation type="journal article" date="2004" name="Nature">
        <title>Genome evolution in yeasts.</title>
        <authorList>
            <person name="Dujon B."/>
            <person name="Sherman D."/>
            <person name="Fischer G."/>
            <person name="Durrens P."/>
            <person name="Casaregola S."/>
            <person name="Lafontaine I."/>
            <person name="de Montigny J."/>
            <person name="Marck C."/>
            <person name="Neuveglise C."/>
            <person name="Talla E."/>
            <person name="Goffard N."/>
            <person name="Frangeul L."/>
            <person name="Aigle M."/>
            <person name="Anthouard V."/>
            <person name="Babour A."/>
            <person name="Barbe V."/>
            <person name="Barnay S."/>
            <person name="Blanchin S."/>
            <person name="Beckerich J.-M."/>
            <person name="Beyne E."/>
            <person name="Bleykasten C."/>
            <person name="Boisrame A."/>
            <person name="Boyer J."/>
            <person name="Cattolico L."/>
            <person name="Confanioleri F."/>
            <person name="de Daruvar A."/>
            <person name="Despons L."/>
            <person name="Fabre E."/>
            <person name="Fairhead C."/>
            <person name="Ferry-Dumazet H."/>
            <person name="Groppi A."/>
            <person name="Hantraye F."/>
            <person name="Hennequin C."/>
            <person name="Jauniaux N."/>
            <person name="Joyet P."/>
            <person name="Kachouri R."/>
            <person name="Kerrest A."/>
            <person name="Koszul R."/>
            <person name="Lemaire M."/>
            <person name="Lesur I."/>
            <person name="Ma L."/>
            <person name="Muller H."/>
            <person name="Nicaud J.-M."/>
            <person name="Nikolski M."/>
            <person name="Oztas S."/>
            <person name="Ozier-Kalogeropoulos O."/>
            <person name="Pellenz S."/>
            <person name="Potier S."/>
            <person name="Richard G.-F."/>
            <person name="Straub M.-L."/>
            <person name="Suleau A."/>
            <person name="Swennen D."/>
            <person name="Tekaia F."/>
            <person name="Wesolowski-Louvel M."/>
            <person name="Westhof E."/>
            <person name="Wirth B."/>
            <person name="Zeniou-Meyer M."/>
            <person name="Zivanovic Y."/>
            <person name="Bolotin-Fukuhara M."/>
            <person name="Thierry A."/>
            <person name="Bouchier C."/>
            <person name="Caudron B."/>
            <person name="Scarpelli C."/>
            <person name="Gaillardin C."/>
            <person name="Weissenbach J."/>
            <person name="Wincker P."/>
            <person name="Souciet J.-L."/>
        </authorList>
    </citation>
    <scope>NUCLEOTIDE SEQUENCE [LARGE SCALE GENOMIC DNA]</scope>
    <source>
        <strain>ATCC 36239 / CBS 767 / BCRC 21394 / JCM 1990 / NBRC 0083 / IGC 2968</strain>
    </source>
</reference>
<proteinExistence type="inferred from homology"/>
<dbReference type="EMBL" id="CR382138">
    <property type="protein sequence ID" value="CAR66270.1"/>
    <property type="molecule type" value="Genomic_DNA"/>
</dbReference>
<dbReference type="RefSeq" id="XP_002770740.1">
    <property type="nucleotide sequence ID" value="XM_002770694.1"/>
</dbReference>
<dbReference type="FunCoup" id="Q6BMK7">
    <property type="interactions" value="534"/>
</dbReference>
<dbReference type="STRING" id="284592.Q6BMK7"/>
<dbReference type="GeneID" id="8998874"/>
<dbReference type="KEGG" id="dha:DEHA2F04554g"/>
<dbReference type="VEuPathDB" id="FungiDB:DEHA2F04554g"/>
<dbReference type="eggNOG" id="KOG2560">
    <property type="taxonomic scope" value="Eukaryota"/>
</dbReference>
<dbReference type="HOGENOM" id="CLU_019317_3_0_1"/>
<dbReference type="InParanoid" id="Q6BMK7"/>
<dbReference type="OMA" id="KYAWESQ"/>
<dbReference type="OrthoDB" id="249612at2759"/>
<dbReference type="Proteomes" id="UP000000599">
    <property type="component" value="Chromosome F"/>
</dbReference>
<dbReference type="GO" id="GO:0005681">
    <property type="term" value="C:spliceosomal complex"/>
    <property type="evidence" value="ECO:0007669"/>
    <property type="project" value="UniProtKB-KW"/>
</dbReference>
<dbReference type="GO" id="GO:0030628">
    <property type="term" value="F:pre-mRNA 3'-splice site binding"/>
    <property type="evidence" value="ECO:0007669"/>
    <property type="project" value="InterPro"/>
</dbReference>
<dbReference type="GO" id="GO:0000398">
    <property type="term" value="P:mRNA splicing, via spliceosome"/>
    <property type="evidence" value="ECO:0007669"/>
    <property type="project" value="InterPro"/>
</dbReference>
<dbReference type="InterPro" id="IPR021715">
    <property type="entry name" value="Slu7_dom"/>
</dbReference>
<dbReference type="InterPro" id="IPR039974">
    <property type="entry name" value="Splicing_factor_SLU7"/>
</dbReference>
<dbReference type="PANTHER" id="PTHR12942:SF2">
    <property type="entry name" value="PRE-MRNA-SPLICING FACTOR SLU7"/>
    <property type="match status" value="1"/>
</dbReference>
<dbReference type="PANTHER" id="PTHR12942">
    <property type="entry name" value="STEP II SPLICING FACTOR SLU7"/>
    <property type="match status" value="1"/>
</dbReference>
<dbReference type="Pfam" id="PF11708">
    <property type="entry name" value="Slu7"/>
    <property type="match status" value="1"/>
</dbReference>
<organism>
    <name type="scientific">Debaryomyces hansenii (strain ATCC 36239 / CBS 767 / BCRC 21394 / JCM 1990 / NBRC 0083 / IGC 2968)</name>
    <name type="common">Yeast</name>
    <name type="synonym">Torulaspora hansenii</name>
    <dbReference type="NCBI Taxonomy" id="284592"/>
    <lineage>
        <taxon>Eukaryota</taxon>
        <taxon>Fungi</taxon>
        <taxon>Dikarya</taxon>
        <taxon>Ascomycota</taxon>
        <taxon>Saccharomycotina</taxon>
        <taxon>Pichiomycetes</taxon>
        <taxon>Debaryomycetaceae</taxon>
        <taxon>Debaryomyces</taxon>
    </lineage>
</organism>
<evidence type="ECO:0000250" key="1"/>
<evidence type="ECO:0000256" key="2">
    <source>
        <dbReference type="SAM" id="MobiDB-lite"/>
    </source>
</evidence>
<evidence type="ECO:0000305" key="3"/>
<name>SLU7_DEBHA</name>